<reference key="1">
    <citation type="submission" date="2001-07" db="EMBL/GenBank/DDBJ databases">
        <title>Genome-wide discovery and analysis of human seven transmembrane helix receptor genes.</title>
        <authorList>
            <person name="Suwa M."/>
            <person name="Sato T."/>
            <person name="Okouchi I."/>
            <person name="Arita M."/>
            <person name="Futami K."/>
            <person name="Matsumoto S."/>
            <person name="Tsutsumi S."/>
            <person name="Aburatani H."/>
            <person name="Asai K."/>
            <person name="Akiyama Y."/>
        </authorList>
    </citation>
    <scope>NUCLEOTIDE SEQUENCE [GENOMIC DNA]</scope>
</reference>
<reference key="2">
    <citation type="journal article" date="2002" name="Genomics">
        <title>DEFOG: a practical scheme for deciphering families of genes.</title>
        <authorList>
            <person name="Fuchs T."/>
            <person name="Malecova B."/>
            <person name="Linhart C."/>
            <person name="Sharan R."/>
            <person name="Khen M."/>
            <person name="Herwig R."/>
            <person name="Shmulevich D."/>
            <person name="Elkon R."/>
            <person name="Steinfath M."/>
            <person name="O'Brien J.K."/>
            <person name="Radelof U."/>
            <person name="Lehrach H."/>
            <person name="Lancet D."/>
            <person name="Shamir R."/>
        </authorList>
    </citation>
    <scope>NUCLEOTIDE SEQUENCE [GENOMIC DNA] OF 66-278</scope>
</reference>
<reference key="3">
    <citation type="journal article" date="2004" name="Proc. Natl. Acad. Sci. U.S.A.">
        <title>The human olfactory receptor gene family.</title>
        <authorList>
            <person name="Malnic B."/>
            <person name="Godfrey P.A."/>
            <person name="Buck L.B."/>
        </authorList>
    </citation>
    <scope>IDENTIFICATION</scope>
</reference>
<reference key="4">
    <citation type="journal article" date="2004" name="Proc. Natl. Acad. Sci. U.S.A.">
        <authorList>
            <person name="Malnic B."/>
            <person name="Godfrey P.A."/>
            <person name="Buck L.B."/>
        </authorList>
    </citation>
    <scope>ERRATUM OF PUBMED:14983052</scope>
</reference>
<proteinExistence type="inferred from homology"/>
<protein>
    <recommendedName>
        <fullName>Olfactory receptor 4B1</fullName>
    </recommendedName>
    <alternativeName>
        <fullName>OST208</fullName>
    </alternativeName>
    <alternativeName>
        <fullName>Olfactory receptor OR11-106</fullName>
    </alternativeName>
</protein>
<organism>
    <name type="scientific">Homo sapiens</name>
    <name type="common">Human</name>
    <dbReference type="NCBI Taxonomy" id="9606"/>
    <lineage>
        <taxon>Eukaryota</taxon>
        <taxon>Metazoa</taxon>
        <taxon>Chordata</taxon>
        <taxon>Craniata</taxon>
        <taxon>Vertebrata</taxon>
        <taxon>Euteleostomi</taxon>
        <taxon>Mammalia</taxon>
        <taxon>Eutheria</taxon>
        <taxon>Euarchontoglires</taxon>
        <taxon>Primates</taxon>
        <taxon>Haplorrhini</taxon>
        <taxon>Catarrhini</taxon>
        <taxon>Hominidae</taxon>
        <taxon>Homo</taxon>
    </lineage>
</organism>
<accession>Q8NGF8</accession>
<accession>Q6IF75</accession>
<accession>Q96R64</accession>
<feature type="chain" id="PRO_0000150528" description="Olfactory receptor 4B1">
    <location>
        <begin position="1"/>
        <end position="309"/>
    </location>
</feature>
<feature type="topological domain" description="Extracellular" evidence="1">
    <location>
        <begin position="1"/>
        <end position="23"/>
    </location>
</feature>
<feature type="transmembrane region" description="Helical; Name=1" evidence="1">
    <location>
        <begin position="24"/>
        <end position="47"/>
    </location>
</feature>
<feature type="topological domain" description="Cytoplasmic" evidence="1">
    <location>
        <begin position="48"/>
        <end position="55"/>
    </location>
</feature>
<feature type="transmembrane region" description="Helical; Name=2" evidence="1">
    <location>
        <begin position="56"/>
        <end position="77"/>
    </location>
</feature>
<feature type="topological domain" description="Extracellular" evidence="1">
    <location>
        <begin position="78"/>
        <end position="98"/>
    </location>
</feature>
<feature type="transmembrane region" description="Helical; Name=3" evidence="1">
    <location>
        <begin position="99"/>
        <end position="118"/>
    </location>
</feature>
<feature type="topological domain" description="Cytoplasmic" evidence="1">
    <location>
        <begin position="119"/>
        <end position="137"/>
    </location>
</feature>
<feature type="transmembrane region" description="Helical; Name=4" evidence="1">
    <location>
        <begin position="138"/>
        <end position="156"/>
    </location>
</feature>
<feature type="topological domain" description="Extracellular" evidence="1">
    <location>
        <begin position="157"/>
        <end position="193"/>
    </location>
</feature>
<feature type="transmembrane region" description="Helical; Name=5" evidence="1">
    <location>
        <begin position="194"/>
        <end position="217"/>
    </location>
</feature>
<feature type="topological domain" description="Cytoplasmic" evidence="1">
    <location>
        <begin position="218"/>
        <end position="233"/>
    </location>
</feature>
<feature type="transmembrane region" description="Helical; Name=6" evidence="1">
    <location>
        <begin position="234"/>
        <end position="256"/>
    </location>
</feature>
<feature type="topological domain" description="Extracellular" evidence="1">
    <location>
        <begin position="257"/>
        <end position="267"/>
    </location>
</feature>
<feature type="transmembrane region" description="Helical; Name=7" evidence="1">
    <location>
        <begin position="268"/>
        <end position="287"/>
    </location>
</feature>
<feature type="topological domain" description="Cytoplasmic" evidence="1">
    <location>
        <begin position="288"/>
        <end position="309"/>
    </location>
</feature>
<feature type="glycosylation site" description="N-linked (GlcNAc...) asparagine" evidence="1">
    <location>
        <position position="6"/>
    </location>
</feature>
<feature type="disulfide bond" evidence="2">
    <location>
        <begin position="95"/>
        <end position="187"/>
    </location>
</feature>
<feature type="sequence variant" id="VAR_034189" description="In dbSNP:rs11606506.">
    <original>C</original>
    <variation>Y</variation>
    <location>
        <position position="63"/>
    </location>
</feature>
<feature type="sequence variant" id="VAR_034190" description="In dbSNP:rs12292056.">
    <original>T</original>
    <variation>N</variation>
    <location>
        <position position="237"/>
    </location>
</feature>
<sequence length="309" mass="34456">MASTSNVTELIFTGLFQDPAVQSVCFVVFLPVYLATVVGNGLIVLTVSISKSLDSPMYFFLSCLSLVEISYSSTIAPKFIIDLLAKIKTISLEGCLTQIFFFHFFGVAEILLIVVMAYDCYVAICKPLHYMNIISRQLCHLLVAGSWLGGFCHSIIQILVIIQLPFCGPNVIDHYFCDLQPLFKLACTDTFMEGVIVLANSGLFSVFSFLILVSSYIVILVNLRNHSAEGRHKALSTCASHITVVILFFGPAIFLYMRPSSTFTEDKLVAVFYTVITPMLNPIIYTLRNAEVKIAIRRLWSKKENPGRE</sequence>
<evidence type="ECO:0000255" key="1"/>
<evidence type="ECO:0000255" key="2">
    <source>
        <dbReference type="PROSITE-ProRule" id="PRU00521"/>
    </source>
</evidence>
<evidence type="ECO:0000305" key="3"/>
<keyword id="KW-1003">Cell membrane</keyword>
<keyword id="KW-1015">Disulfide bond</keyword>
<keyword id="KW-0297">G-protein coupled receptor</keyword>
<keyword id="KW-0325">Glycoprotein</keyword>
<keyword id="KW-0472">Membrane</keyword>
<keyword id="KW-0552">Olfaction</keyword>
<keyword id="KW-0675">Receptor</keyword>
<keyword id="KW-1185">Reference proteome</keyword>
<keyword id="KW-0716">Sensory transduction</keyword>
<keyword id="KW-0807">Transducer</keyword>
<keyword id="KW-0812">Transmembrane</keyword>
<keyword id="KW-1133">Transmembrane helix</keyword>
<name>OR4B1_HUMAN</name>
<comment type="function">
    <text evidence="3">Odorant receptor.</text>
</comment>
<comment type="subcellular location">
    <subcellularLocation>
        <location>Cell membrane</location>
        <topology>Multi-pass membrane protein</topology>
    </subcellularLocation>
</comment>
<comment type="similarity">
    <text evidence="2">Belongs to the G-protein coupled receptor 1 family.</text>
</comment>
<comment type="online information" name="Human Olfactory Receptor Data Exploratorium (HORDE)">
    <link uri="https://genome.weizmann.ac.il/horde/card/index/symbol:OR4B1/term:OR4B1/type:keyword"/>
</comment>
<dbReference type="EMBL" id="AB065848">
    <property type="protein sequence ID" value="BAC06066.1"/>
    <property type="molecule type" value="Genomic_DNA"/>
</dbReference>
<dbReference type="EMBL" id="AF399579">
    <property type="protein sequence ID" value="AAK95064.1"/>
    <property type="molecule type" value="Genomic_DNA"/>
</dbReference>
<dbReference type="EMBL" id="BK004387">
    <property type="protein sequence ID" value="DAA04785.1"/>
    <property type="molecule type" value="Genomic_DNA"/>
</dbReference>
<dbReference type="CCDS" id="CCDS31485.1"/>
<dbReference type="RefSeq" id="NP_001005470.1">
    <property type="nucleotide sequence ID" value="NM_001005470.1"/>
</dbReference>
<dbReference type="SMR" id="Q8NGF8"/>
<dbReference type="BioGRID" id="125660">
    <property type="interactions" value="1"/>
</dbReference>
<dbReference type="FunCoup" id="Q8NGF8">
    <property type="interactions" value="418"/>
</dbReference>
<dbReference type="STRING" id="9606.ENSP00000311605"/>
<dbReference type="GlyCosmos" id="Q8NGF8">
    <property type="glycosylation" value="1 site, No reported glycans"/>
</dbReference>
<dbReference type="GlyGen" id="Q8NGF8">
    <property type="glycosylation" value="1 site"/>
</dbReference>
<dbReference type="BioMuta" id="OR4B1"/>
<dbReference type="DMDM" id="38372682"/>
<dbReference type="PaxDb" id="9606-ENSP00000311605"/>
<dbReference type="Antibodypedia" id="26973">
    <property type="antibodies" value="41 antibodies from 16 providers"/>
</dbReference>
<dbReference type="DNASU" id="119765"/>
<dbReference type="Ensembl" id="ENST00000309562.3">
    <property type="protein sequence ID" value="ENSP00000311605.2"/>
    <property type="gene ID" value="ENSG00000175619.3"/>
</dbReference>
<dbReference type="GeneID" id="119765"/>
<dbReference type="KEGG" id="hsa:119765"/>
<dbReference type="MANE-Select" id="ENST00000309562.3">
    <property type="protein sequence ID" value="ENSP00000311605.2"/>
    <property type="RefSeq nucleotide sequence ID" value="NM_001005470.1"/>
    <property type="RefSeq protein sequence ID" value="NP_001005470.1"/>
</dbReference>
<dbReference type="UCSC" id="uc010rhs.3">
    <property type="organism name" value="human"/>
</dbReference>
<dbReference type="AGR" id="HGNC:8290"/>
<dbReference type="CTD" id="119765"/>
<dbReference type="DisGeNET" id="119765"/>
<dbReference type="GeneCards" id="OR4B1"/>
<dbReference type="HGNC" id="HGNC:8290">
    <property type="gene designation" value="OR4B1"/>
</dbReference>
<dbReference type="HPA" id="ENSG00000175619">
    <property type="expression patterns" value="Not detected"/>
</dbReference>
<dbReference type="neXtProt" id="NX_Q8NGF8"/>
<dbReference type="OpenTargets" id="ENSG00000175619"/>
<dbReference type="PharmGKB" id="PA32250"/>
<dbReference type="VEuPathDB" id="HostDB:ENSG00000175619"/>
<dbReference type="eggNOG" id="ENOG502QVH7">
    <property type="taxonomic scope" value="Eukaryota"/>
</dbReference>
<dbReference type="GeneTree" id="ENSGT00940000155395"/>
<dbReference type="HOGENOM" id="CLU_012526_8_1_1"/>
<dbReference type="InParanoid" id="Q8NGF8"/>
<dbReference type="OMA" id="QLCHILV"/>
<dbReference type="OrthoDB" id="10017003at2759"/>
<dbReference type="PAN-GO" id="Q8NGF8">
    <property type="GO annotations" value="2 GO annotations based on evolutionary models"/>
</dbReference>
<dbReference type="PhylomeDB" id="Q8NGF8"/>
<dbReference type="TreeFam" id="TF337350"/>
<dbReference type="PathwayCommons" id="Q8NGF8"/>
<dbReference type="Reactome" id="R-HSA-9752946">
    <property type="pathway name" value="Expression and translocation of olfactory receptors"/>
</dbReference>
<dbReference type="BioGRID-ORCS" id="119765">
    <property type="hits" value="13 hits in 748 CRISPR screens"/>
</dbReference>
<dbReference type="GeneWiki" id="OR4B1"/>
<dbReference type="GenomeRNAi" id="119765"/>
<dbReference type="Pharos" id="Q8NGF8">
    <property type="development level" value="Tdark"/>
</dbReference>
<dbReference type="PRO" id="PR:Q8NGF8"/>
<dbReference type="Proteomes" id="UP000005640">
    <property type="component" value="Chromosome 11"/>
</dbReference>
<dbReference type="RNAct" id="Q8NGF8">
    <property type="molecule type" value="protein"/>
</dbReference>
<dbReference type="ExpressionAtlas" id="Q8NGF8">
    <property type="expression patterns" value="differential"/>
</dbReference>
<dbReference type="GO" id="GO:0005886">
    <property type="term" value="C:plasma membrane"/>
    <property type="evidence" value="ECO:0000318"/>
    <property type="project" value="GO_Central"/>
</dbReference>
<dbReference type="GO" id="GO:0004930">
    <property type="term" value="F:G protein-coupled receptor activity"/>
    <property type="evidence" value="ECO:0007669"/>
    <property type="project" value="UniProtKB-KW"/>
</dbReference>
<dbReference type="GO" id="GO:0004984">
    <property type="term" value="F:olfactory receptor activity"/>
    <property type="evidence" value="ECO:0000318"/>
    <property type="project" value="GO_Central"/>
</dbReference>
<dbReference type="CDD" id="cd15939">
    <property type="entry name" value="7tmA_OR4A-like"/>
    <property type="match status" value="1"/>
</dbReference>
<dbReference type="FunFam" id="1.20.1070.10:FF:000007">
    <property type="entry name" value="Olfactory receptor"/>
    <property type="match status" value="1"/>
</dbReference>
<dbReference type="Gene3D" id="1.20.1070.10">
    <property type="entry name" value="Rhodopsin 7-helix transmembrane proteins"/>
    <property type="match status" value="1"/>
</dbReference>
<dbReference type="InterPro" id="IPR000276">
    <property type="entry name" value="GPCR_Rhodpsn"/>
</dbReference>
<dbReference type="InterPro" id="IPR017452">
    <property type="entry name" value="GPCR_Rhodpsn_7TM"/>
</dbReference>
<dbReference type="InterPro" id="IPR000725">
    <property type="entry name" value="Olfact_rcpt"/>
</dbReference>
<dbReference type="InterPro" id="IPR050427">
    <property type="entry name" value="Olfactory_Receptors"/>
</dbReference>
<dbReference type="PANTHER" id="PTHR48002">
    <property type="entry name" value="OLFACTORY RECEPTOR"/>
    <property type="match status" value="1"/>
</dbReference>
<dbReference type="Pfam" id="PF13853">
    <property type="entry name" value="7tm_4"/>
    <property type="match status" value="1"/>
</dbReference>
<dbReference type="PRINTS" id="PR00237">
    <property type="entry name" value="GPCRRHODOPSN"/>
</dbReference>
<dbReference type="PRINTS" id="PR00245">
    <property type="entry name" value="OLFACTORYR"/>
</dbReference>
<dbReference type="SUPFAM" id="SSF81321">
    <property type="entry name" value="Family A G protein-coupled receptor-like"/>
    <property type="match status" value="1"/>
</dbReference>
<dbReference type="PROSITE" id="PS50262">
    <property type="entry name" value="G_PROTEIN_RECEP_F1_2"/>
    <property type="match status" value="1"/>
</dbReference>
<gene>
    <name type="primary">OR4B1</name>
</gene>